<feature type="chain" id="PRO_0000202197" description="Uncharacterized protein TP_0135">
    <location>
        <begin position="1"/>
        <end position="313"/>
    </location>
</feature>
<organism>
    <name type="scientific">Treponema pallidum (strain Nichols)</name>
    <dbReference type="NCBI Taxonomy" id="243276"/>
    <lineage>
        <taxon>Bacteria</taxon>
        <taxon>Pseudomonadati</taxon>
        <taxon>Spirochaetota</taxon>
        <taxon>Spirochaetia</taxon>
        <taxon>Spirochaetales</taxon>
        <taxon>Treponemataceae</taxon>
        <taxon>Treponema</taxon>
    </lineage>
</organism>
<keyword id="KW-1185">Reference proteome</keyword>
<dbReference type="EMBL" id="AE000520">
    <property type="protein sequence ID" value="AAC65126.1"/>
    <property type="molecule type" value="Genomic_DNA"/>
</dbReference>
<dbReference type="PIR" id="D71363">
    <property type="entry name" value="D71363"/>
</dbReference>
<dbReference type="RefSeq" id="WP_010881583.1">
    <property type="nucleotide sequence ID" value="NC_000919.1"/>
</dbReference>
<dbReference type="IntAct" id="O83171">
    <property type="interactions" value="4"/>
</dbReference>
<dbReference type="STRING" id="243276.TP_0135"/>
<dbReference type="EnsemblBacteria" id="AAC65126">
    <property type="protein sequence ID" value="AAC65126"/>
    <property type="gene ID" value="TP_0135"/>
</dbReference>
<dbReference type="KEGG" id="tpa:TP_0135"/>
<dbReference type="HOGENOM" id="CLU_983323_0_0_12"/>
<dbReference type="Proteomes" id="UP000000811">
    <property type="component" value="Chromosome"/>
</dbReference>
<accession>O83171</accession>
<reference key="1">
    <citation type="journal article" date="1998" name="Science">
        <title>Complete genome sequence of Treponema pallidum, the syphilis spirochete.</title>
        <authorList>
            <person name="Fraser C.M."/>
            <person name="Norris S.J."/>
            <person name="Weinstock G.M."/>
            <person name="White O."/>
            <person name="Sutton G.G."/>
            <person name="Dodson R.J."/>
            <person name="Gwinn M.L."/>
            <person name="Hickey E.K."/>
            <person name="Clayton R.A."/>
            <person name="Ketchum K.A."/>
            <person name="Sodergren E."/>
            <person name="Hardham J.M."/>
            <person name="McLeod M.P."/>
            <person name="Salzberg S.L."/>
            <person name="Peterson J.D."/>
            <person name="Khalak H.G."/>
            <person name="Richardson D.L."/>
            <person name="Howell J.K."/>
            <person name="Chidambaram M."/>
            <person name="Utterback T.R."/>
            <person name="McDonald L.A."/>
            <person name="Artiach P."/>
            <person name="Bowman C."/>
            <person name="Cotton M.D."/>
            <person name="Fujii C."/>
            <person name="Garland S.A."/>
            <person name="Hatch B."/>
            <person name="Horst K."/>
            <person name="Roberts K.M."/>
            <person name="Sandusky M."/>
            <person name="Weidman J.F."/>
            <person name="Smith H.O."/>
            <person name="Venter J.C."/>
        </authorList>
    </citation>
    <scope>NUCLEOTIDE SEQUENCE [LARGE SCALE GENOMIC DNA]</scope>
    <source>
        <strain>Nichols</strain>
    </source>
</reference>
<gene>
    <name type="ordered locus">TP_0135</name>
</gene>
<proteinExistence type="predicted"/>
<protein>
    <recommendedName>
        <fullName>Uncharacterized protein TP_0135</fullName>
    </recommendedName>
</protein>
<name>Y135_TREPA</name>
<sequence length="313" mass="33849">MRASEVIADIYPGGDKLRSARVSLLSLFFNHFFARPGYAAICSTGTQGPALCQLKVTAGPCFEQKTVVRRRVVVLVAEAGPHRQRQTDAPEGERVTCIQRYRNGKVGTQPLLLVIERITAGVLRARINPERQAAIHKILVSKRHPKRGVNFLIPVGCNAPRSPRAVLHQSTWKRGTAPINETRAIPRPAAVTSHDAAGATSCAYAAPAATPTPQRRPAESVSRVPRTVLAVSYVFSLHTFQKAAGNPHSLPKFYPPPANICRVLFLQEGRAPRTTAAYPVRACNILTGEVFSHTGEVLCANRACGASPTPSSM</sequence>